<evidence type="ECO:0000255" key="1">
    <source>
        <dbReference type="HAMAP-Rule" id="MF_01606"/>
    </source>
</evidence>
<reference key="1">
    <citation type="journal article" date="2008" name="Genome Res.">
        <title>Comparative genome analysis of Salmonella enteritidis PT4 and Salmonella gallinarum 287/91 provides insights into evolutionary and host adaptation pathways.</title>
        <authorList>
            <person name="Thomson N.R."/>
            <person name="Clayton D.J."/>
            <person name="Windhorst D."/>
            <person name="Vernikos G."/>
            <person name="Davidson S."/>
            <person name="Churcher C."/>
            <person name="Quail M.A."/>
            <person name="Stevens M."/>
            <person name="Jones M.A."/>
            <person name="Watson M."/>
            <person name="Barron A."/>
            <person name="Layton A."/>
            <person name="Pickard D."/>
            <person name="Kingsley R.A."/>
            <person name="Bignell A."/>
            <person name="Clark L."/>
            <person name="Harris B."/>
            <person name="Ormond D."/>
            <person name="Abdellah Z."/>
            <person name="Brooks K."/>
            <person name="Cherevach I."/>
            <person name="Chillingworth T."/>
            <person name="Woodward J."/>
            <person name="Norberczak H."/>
            <person name="Lord A."/>
            <person name="Arrowsmith C."/>
            <person name="Jagels K."/>
            <person name="Moule S."/>
            <person name="Mungall K."/>
            <person name="Saunders M."/>
            <person name="Whitehead S."/>
            <person name="Chabalgoity J.A."/>
            <person name="Maskell D."/>
            <person name="Humphreys T."/>
            <person name="Roberts M."/>
            <person name="Barrow P.A."/>
            <person name="Dougan G."/>
            <person name="Parkhill J."/>
        </authorList>
    </citation>
    <scope>NUCLEOTIDE SEQUENCE [LARGE SCALE GENOMIC DNA]</scope>
    <source>
        <strain>287/91 / NCTC 13346</strain>
    </source>
</reference>
<organism>
    <name type="scientific">Salmonella gallinarum (strain 287/91 / NCTC 13346)</name>
    <dbReference type="NCBI Taxonomy" id="550538"/>
    <lineage>
        <taxon>Bacteria</taxon>
        <taxon>Pseudomonadati</taxon>
        <taxon>Pseudomonadota</taxon>
        <taxon>Gammaproteobacteria</taxon>
        <taxon>Enterobacterales</taxon>
        <taxon>Enterobacteriaceae</taxon>
        <taxon>Salmonella</taxon>
    </lineage>
</organism>
<dbReference type="EMBL" id="AM933173">
    <property type="protein sequence ID" value="CAR40006.1"/>
    <property type="molecule type" value="Genomic_DNA"/>
</dbReference>
<dbReference type="RefSeq" id="WP_000331471.1">
    <property type="nucleotide sequence ID" value="NC_011274.1"/>
</dbReference>
<dbReference type="SMR" id="B5R9F8"/>
<dbReference type="KEGG" id="seg:SG4243"/>
<dbReference type="HOGENOM" id="CLU_076075_2_0_6"/>
<dbReference type="Proteomes" id="UP000008321">
    <property type="component" value="Chromosome"/>
</dbReference>
<dbReference type="GO" id="GO:0005737">
    <property type="term" value="C:cytoplasm"/>
    <property type="evidence" value="ECO:0007669"/>
    <property type="project" value="UniProtKB-SubCell"/>
</dbReference>
<dbReference type="GO" id="GO:0046872">
    <property type="term" value="F:metal ion binding"/>
    <property type="evidence" value="ECO:0007669"/>
    <property type="project" value="UniProtKB-KW"/>
</dbReference>
<dbReference type="GO" id="GO:0030091">
    <property type="term" value="P:protein repair"/>
    <property type="evidence" value="ECO:0007669"/>
    <property type="project" value="UniProtKB-UniRule"/>
</dbReference>
<dbReference type="GO" id="GO:0051409">
    <property type="term" value="P:response to nitrosative stress"/>
    <property type="evidence" value="ECO:0007669"/>
    <property type="project" value="UniProtKB-UniRule"/>
</dbReference>
<dbReference type="GO" id="GO:0006979">
    <property type="term" value="P:response to oxidative stress"/>
    <property type="evidence" value="ECO:0007669"/>
    <property type="project" value="UniProtKB-UniRule"/>
</dbReference>
<dbReference type="FunFam" id="1.20.120.520:FF:000001">
    <property type="entry name" value="Iron-sulfur cluster repair protein YtfE"/>
    <property type="match status" value="1"/>
</dbReference>
<dbReference type="Gene3D" id="1.20.120.520">
    <property type="entry name" value="nmb1532 protein domain like"/>
    <property type="match status" value="1"/>
</dbReference>
<dbReference type="HAMAP" id="MF_01606">
    <property type="entry name" value="RIC_YtfE"/>
    <property type="match status" value="1"/>
</dbReference>
<dbReference type="InterPro" id="IPR023742">
    <property type="entry name" value="FeS-repair_YftE"/>
</dbReference>
<dbReference type="InterPro" id="IPR012312">
    <property type="entry name" value="Hemerythrin-like"/>
</dbReference>
<dbReference type="InterPro" id="IPR019903">
    <property type="entry name" value="RIC_family"/>
</dbReference>
<dbReference type="NCBIfam" id="TIGR03652">
    <property type="entry name" value="FeS_repair_RIC"/>
    <property type="match status" value="1"/>
</dbReference>
<dbReference type="NCBIfam" id="NF008221">
    <property type="entry name" value="PRK10992.1"/>
    <property type="match status" value="1"/>
</dbReference>
<dbReference type="PANTHER" id="PTHR36438">
    <property type="entry name" value="IRON-SULFUR CLUSTER REPAIR PROTEIN YTFE"/>
    <property type="match status" value="1"/>
</dbReference>
<dbReference type="PANTHER" id="PTHR36438:SF1">
    <property type="entry name" value="IRON-SULFUR CLUSTER REPAIR PROTEIN YTFE"/>
    <property type="match status" value="1"/>
</dbReference>
<dbReference type="Pfam" id="PF01814">
    <property type="entry name" value="Hemerythrin"/>
    <property type="match status" value="1"/>
</dbReference>
<dbReference type="Pfam" id="PF04405">
    <property type="entry name" value="ScdA_N"/>
    <property type="match status" value="1"/>
</dbReference>
<name>YTFE_SALG2</name>
<feature type="chain" id="PRO_1000148185" description="Iron-sulfur cluster repair protein YtfE">
    <location>
        <begin position="1"/>
        <end position="220"/>
    </location>
</feature>
<comment type="function">
    <text evidence="1">Di-iron-containing protein involved in the repair of iron-sulfur clusters damaged by oxidative and nitrosative stress conditions.</text>
</comment>
<comment type="subunit">
    <text evidence="1">Homodimer.</text>
</comment>
<comment type="subcellular location">
    <subcellularLocation>
        <location evidence="1">Cytoplasm</location>
    </subcellularLocation>
</comment>
<comment type="similarity">
    <text evidence="1">Belongs to the RIC family. YtfE subfamily.</text>
</comment>
<protein>
    <recommendedName>
        <fullName evidence="1">Iron-sulfur cluster repair protein YtfE</fullName>
    </recommendedName>
</protein>
<sequence>MAYRDQPLGELALSIPRASALFRQYDMDYCCGGKQTLARAAARHDVDIDIIEAQLAQLAEQPIEKDWRAVPLADIIDHIVVRYHDRHREQLPELILQATKVERVHADKPNVPRGLTKYLTALHEELSSHMMKEEQILFPMIKQGMGRQATGPISVMESEHDEAGELVDVIKHVTQNVTPPPEACTTWKAMYNGINEMIDDLMEHISLENNVLFPRALAGE</sequence>
<proteinExistence type="inferred from homology"/>
<gene>
    <name evidence="1" type="primary">ytfE</name>
    <name type="ordered locus">SG4243</name>
</gene>
<keyword id="KW-0963">Cytoplasm</keyword>
<keyword id="KW-0408">Iron</keyword>
<keyword id="KW-0479">Metal-binding</keyword>
<keyword id="KW-0346">Stress response</keyword>
<accession>B5R9F8</accession>